<evidence type="ECO:0000255" key="1">
    <source>
        <dbReference type="PROSITE-ProRule" id="PRU00625"/>
    </source>
</evidence>
<evidence type="ECO:0000256" key="2">
    <source>
        <dbReference type="SAM" id="MobiDB-lite"/>
    </source>
</evidence>
<evidence type="ECO:0000269" key="3">
    <source>
    </source>
</evidence>
<evidence type="ECO:0000269" key="4">
    <source>
    </source>
</evidence>
<evidence type="ECO:0000269" key="5">
    <source>
    </source>
</evidence>
<evidence type="ECO:0000269" key="6">
    <source>
    </source>
</evidence>
<evidence type="ECO:0000269" key="7">
    <source>
    </source>
</evidence>
<evidence type="ECO:0000269" key="8">
    <source>
    </source>
</evidence>
<evidence type="ECO:0000269" key="9">
    <source>
    </source>
</evidence>
<evidence type="ECO:0000269" key="10">
    <source>
    </source>
</evidence>
<evidence type="ECO:0000269" key="11">
    <source>
    </source>
</evidence>
<evidence type="ECO:0000269" key="12">
    <source>
    </source>
</evidence>
<evidence type="ECO:0000269" key="13">
    <source>
    </source>
</evidence>
<evidence type="ECO:0000269" key="14">
    <source>
    </source>
</evidence>
<evidence type="ECO:0000269" key="15">
    <source>
    </source>
</evidence>
<evidence type="ECO:0000269" key="16">
    <source>
    </source>
</evidence>
<evidence type="ECO:0000269" key="17">
    <source>
    </source>
</evidence>
<evidence type="ECO:0000269" key="18">
    <source>
    </source>
</evidence>
<evidence type="ECO:0000269" key="19">
    <source>
    </source>
</evidence>
<evidence type="ECO:0000303" key="20">
    <source>
    </source>
</evidence>
<evidence type="ECO:0000303" key="21">
    <source>
    </source>
</evidence>
<evidence type="ECO:0000312" key="22">
    <source>
        <dbReference type="Araport" id="AT2G46830"/>
    </source>
</evidence>
<evidence type="ECO:0000312" key="23">
    <source>
        <dbReference type="EMBL" id="AAC33507.1"/>
    </source>
</evidence>
<gene>
    <name evidence="21" type="primary">CCA1</name>
    <name evidence="22" type="ordered locus">At2g46830</name>
    <name evidence="23" type="ORF">F19D11</name>
</gene>
<accession>P92973</accession>
<accession>Q8S8N5</accession>
<dbReference type="EMBL" id="U28422">
    <property type="protein sequence ID" value="AAB40525.1"/>
    <property type="molecule type" value="mRNA"/>
</dbReference>
<dbReference type="EMBL" id="U79156">
    <property type="protein sequence ID" value="AAC98813.1"/>
    <property type="molecule type" value="Genomic_DNA"/>
</dbReference>
<dbReference type="EMBL" id="AY519511">
    <property type="protein sequence ID" value="AAS09981.1"/>
    <property type="molecule type" value="mRNA"/>
</dbReference>
<dbReference type="EMBL" id="AC005310">
    <property type="protein sequence ID" value="AAC33507.1"/>
    <property type="molecule type" value="Genomic_DNA"/>
</dbReference>
<dbReference type="EMBL" id="AC005310">
    <property type="protein sequence ID" value="AAM15022.1"/>
    <property type="molecule type" value="Genomic_DNA"/>
</dbReference>
<dbReference type="EMBL" id="CP002685">
    <property type="protein sequence ID" value="AEC10760.1"/>
    <property type="molecule type" value="Genomic_DNA"/>
</dbReference>
<dbReference type="EMBL" id="CP002685">
    <property type="protein sequence ID" value="AEC10761.1"/>
    <property type="molecule type" value="Genomic_DNA"/>
</dbReference>
<dbReference type="EMBL" id="CP002685">
    <property type="protein sequence ID" value="ANM61754.1"/>
    <property type="molecule type" value="Genomic_DNA"/>
</dbReference>
<dbReference type="EMBL" id="BT001096">
    <property type="protein sequence ID" value="AAN61004.1"/>
    <property type="molecule type" value="mRNA"/>
</dbReference>
<dbReference type="EMBL" id="BT001105">
    <property type="protein sequence ID" value="AAN64169.1"/>
    <property type="molecule type" value="mRNA"/>
</dbReference>
<dbReference type="PIR" id="T02684">
    <property type="entry name" value="T02684"/>
</dbReference>
<dbReference type="RefSeq" id="NP_001318437.1">
    <molecule id="P92973-2"/>
    <property type="nucleotide sequence ID" value="NM_001337221.1"/>
</dbReference>
<dbReference type="RefSeq" id="NP_850460.1">
    <molecule id="P92973-1"/>
    <property type="nucleotide sequence ID" value="NM_180129.4"/>
</dbReference>
<dbReference type="RefSeq" id="NP_850461.1">
    <molecule id="P92973-2"/>
    <property type="nucleotide sequence ID" value="NM_180130.2"/>
</dbReference>
<dbReference type="SMR" id="P92973"/>
<dbReference type="BioGRID" id="4631">
    <property type="interactions" value="24"/>
</dbReference>
<dbReference type="FunCoup" id="P92973">
    <property type="interactions" value="19"/>
</dbReference>
<dbReference type="IntAct" id="P92973">
    <property type="interactions" value="11"/>
</dbReference>
<dbReference type="STRING" id="3702.P92973"/>
<dbReference type="iPTMnet" id="P92973"/>
<dbReference type="PaxDb" id="3702-AT2G46830.1"/>
<dbReference type="ProteomicsDB" id="239154">
    <molecule id="P92973-1"/>
</dbReference>
<dbReference type="EnsemblPlants" id="AT2G46830.1">
    <molecule id="P92973-1"/>
    <property type="protein sequence ID" value="AT2G46830.1"/>
    <property type="gene ID" value="AT2G46830"/>
</dbReference>
<dbReference type="EnsemblPlants" id="AT2G46830.2">
    <molecule id="P92973-2"/>
    <property type="protein sequence ID" value="AT2G46830.2"/>
    <property type="gene ID" value="AT2G46830"/>
</dbReference>
<dbReference type="EnsemblPlants" id="AT2G46830.3">
    <molecule id="P92973-2"/>
    <property type="protein sequence ID" value="AT2G46830.3"/>
    <property type="gene ID" value="AT2G46830"/>
</dbReference>
<dbReference type="GeneID" id="819296"/>
<dbReference type="Gramene" id="AT2G46830.1">
    <molecule id="P92973-1"/>
    <property type="protein sequence ID" value="AT2G46830.1"/>
    <property type="gene ID" value="AT2G46830"/>
</dbReference>
<dbReference type="Gramene" id="AT2G46830.2">
    <molecule id="P92973-2"/>
    <property type="protein sequence ID" value="AT2G46830.2"/>
    <property type="gene ID" value="AT2G46830"/>
</dbReference>
<dbReference type="Gramene" id="AT2G46830.3">
    <molecule id="P92973-2"/>
    <property type="protein sequence ID" value="AT2G46830.3"/>
    <property type="gene ID" value="AT2G46830"/>
</dbReference>
<dbReference type="KEGG" id="ath:AT2G46830"/>
<dbReference type="Araport" id="AT2G46830"/>
<dbReference type="TAIR" id="AT2G46830">
    <property type="gene designation" value="CCA1"/>
</dbReference>
<dbReference type="eggNOG" id="KOG0724">
    <property type="taxonomic scope" value="Eukaryota"/>
</dbReference>
<dbReference type="HOGENOM" id="CLU_025358_0_0_1"/>
<dbReference type="InParanoid" id="P92973"/>
<dbReference type="OMA" id="ANYSEPQ"/>
<dbReference type="OrthoDB" id="118550at2759"/>
<dbReference type="PhylomeDB" id="P92973"/>
<dbReference type="PRO" id="PR:P92973"/>
<dbReference type="Proteomes" id="UP000006548">
    <property type="component" value="Chromosome 2"/>
</dbReference>
<dbReference type="ExpressionAtlas" id="P92973">
    <property type="expression patterns" value="baseline and differential"/>
</dbReference>
<dbReference type="GO" id="GO:0005634">
    <property type="term" value="C:nucleus"/>
    <property type="evidence" value="ECO:0000314"/>
    <property type="project" value="TAIR"/>
</dbReference>
<dbReference type="GO" id="GO:0000987">
    <property type="term" value="F:cis-regulatory region sequence-specific DNA binding"/>
    <property type="evidence" value="ECO:0000314"/>
    <property type="project" value="UniProtKB"/>
</dbReference>
<dbReference type="GO" id="GO:0003677">
    <property type="term" value="F:DNA binding"/>
    <property type="evidence" value="ECO:0000314"/>
    <property type="project" value="TAIR"/>
</dbReference>
<dbReference type="GO" id="GO:0003700">
    <property type="term" value="F:DNA-binding transcription factor activity"/>
    <property type="evidence" value="ECO:0000250"/>
    <property type="project" value="TAIR"/>
</dbReference>
<dbReference type="GO" id="GO:0043565">
    <property type="term" value="F:sequence-specific DNA binding"/>
    <property type="evidence" value="ECO:0000314"/>
    <property type="project" value="TAIR"/>
</dbReference>
<dbReference type="GO" id="GO:0007623">
    <property type="term" value="P:circadian rhythm"/>
    <property type="evidence" value="ECO:0000315"/>
    <property type="project" value="UniProtKB"/>
</dbReference>
<dbReference type="GO" id="GO:0048574">
    <property type="term" value="P:long-day photoperiodism, flowering"/>
    <property type="evidence" value="ECO:0000316"/>
    <property type="project" value="TAIR"/>
</dbReference>
<dbReference type="GO" id="GO:0042754">
    <property type="term" value="P:negative regulation of circadian rhythm"/>
    <property type="evidence" value="ECO:0000315"/>
    <property type="project" value="TAIR"/>
</dbReference>
<dbReference type="GO" id="GO:0045892">
    <property type="term" value="P:negative regulation of DNA-templated transcription"/>
    <property type="evidence" value="ECO:0000315"/>
    <property type="project" value="TAIR"/>
</dbReference>
<dbReference type="GO" id="GO:0045893">
    <property type="term" value="P:positive regulation of DNA-templated transcription"/>
    <property type="evidence" value="ECO:0000315"/>
    <property type="project" value="TAIR"/>
</dbReference>
<dbReference type="GO" id="GO:0010468">
    <property type="term" value="P:regulation of gene expression"/>
    <property type="evidence" value="ECO:0000315"/>
    <property type="project" value="TAIR"/>
</dbReference>
<dbReference type="GO" id="GO:0043254">
    <property type="term" value="P:regulation of protein-containing complex assembly"/>
    <property type="evidence" value="ECO:0000315"/>
    <property type="project" value="TAIR"/>
</dbReference>
<dbReference type="GO" id="GO:0009409">
    <property type="term" value="P:response to cold"/>
    <property type="evidence" value="ECO:0000316"/>
    <property type="project" value="TAIR"/>
</dbReference>
<dbReference type="GO" id="GO:0009408">
    <property type="term" value="P:response to heat"/>
    <property type="evidence" value="ECO:0000270"/>
    <property type="project" value="UniProtKB"/>
</dbReference>
<dbReference type="GO" id="GO:0010378">
    <property type="term" value="P:temperature compensation of the circadian clock"/>
    <property type="evidence" value="ECO:0000315"/>
    <property type="project" value="UniProtKB"/>
</dbReference>
<dbReference type="CDD" id="cd00167">
    <property type="entry name" value="SANT"/>
    <property type="match status" value="1"/>
</dbReference>
<dbReference type="FunFam" id="1.10.10.60:FF:000023">
    <property type="entry name" value="protein REVEILLE 6 isoform X1"/>
    <property type="match status" value="1"/>
</dbReference>
<dbReference type="Gene3D" id="1.10.10.60">
    <property type="entry name" value="Homeodomain-like"/>
    <property type="match status" value="1"/>
</dbReference>
<dbReference type="InterPro" id="IPR009057">
    <property type="entry name" value="Homeodomain-like_sf"/>
</dbReference>
<dbReference type="InterPro" id="IPR017930">
    <property type="entry name" value="Myb_dom"/>
</dbReference>
<dbReference type="InterPro" id="IPR006447">
    <property type="entry name" value="Myb_dom_plants"/>
</dbReference>
<dbReference type="InterPro" id="IPR001005">
    <property type="entry name" value="SANT/Myb"/>
</dbReference>
<dbReference type="InterPro" id="IPR017884">
    <property type="entry name" value="SANT_dom"/>
</dbReference>
<dbReference type="NCBIfam" id="TIGR01557">
    <property type="entry name" value="myb_SHAQKYF"/>
    <property type="match status" value="1"/>
</dbReference>
<dbReference type="PANTHER" id="PTHR12802:SF177">
    <property type="entry name" value="PROTEIN CCA1"/>
    <property type="match status" value="1"/>
</dbReference>
<dbReference type="PANTHER" id="PTHR12802">
    <property type="entry name" value="SWI/SNF COMPLEX-RELATED"/>
    <property type="match status" value="1"/>
</dbReference>
<dbReference type="Pfam" id="PF00249">
    <property type="entry name" value="Myb_DNA-binding"/>
    <property type="match status" value="1"/>
</dbReference>
<dbReference type="SMART" id="SM00717">
    <property type="entry name" value="SANT"/>
    <property type="match status" value="1"/>
</dbReference>
<dbReference type="SUPFAM" id="SSF46689">
    <property type="entry name" value="Homeodomain-like"/>
    <property type="match status" value="1"/>
</dbReference>
<dbReference type="PROSITE" id="PS51294">
    <property type="entry name" value="HTH_MYB"/>
    <property type="match status" value="1"/>
</dbReference>
<sequence>METNSSGEDLVIKTRKPYTITKQRERWTEEEHNRFIEALRLYGRAWQKIEEHVATKTAVQIRSHAQKFFSKVEKEAEAKGVAMGQALDIAIPPPRPKRKPNNPYPRKTGSGTILMSKTGVNDGKESLGSEKVSHPEMANEDRQQSKPEEKTLQEDNCSDCFTHQYLSAASSMNKSCIETSNASTFREFLPSREEGSQNNRVRKESNSDLNAKSLENGNEQGPQTYPMHIPVLVPLGSSITSSLSHPPSEPDSHPHTVAGDYQSFPNHIMSTLLQTPALYTAATFASSFWPPDSSGGSPVPGNSPPNLAAMAAATVAAASAWWAANGLLPLCAPLSSGGFTSHPPSTFGPSCDVEYTKASTLQHGSVQSREQEHSEASKARSSLDSEDVENKSKPVCHEQPSATPESDAKGSDGAGDRKQVDRSSCGSNTPSSSDDVEADASERQEDGTNGEVKETNEDTNKPQTSESNARRSRISSNITDPWKSVSDEGRIAFQALFSREVLPQSFTYREEHREEEQQQQEQRYPMALDLNFTAQLTPVDDQEEKRNTGFLGIGLDASKLMSRGRTGFKPYKRCSMEAKESRILNNNPIIHVEQKDPKRMRLETQAST</sequence>
<keyword id="KW-0025">Alternative splicing</keyword>
<keyword id="KW-0090">Biological rhythms</keyword>
<keyword id="KW-0238">DNA-binding</keyword>
<keyword id="KW-0539">Nucleus</keyword>
<keyword id="KW-0597">Phosphoprotein</keyword>
<keyword id="KW-1185">Reference proteome</keyword>
<keyword id="KW-0804">Transcription</keyword>
<keyword id="KW-0805">Transcription regulation</keyword>
<proteinExistence type="evidence at protein level"/>
<reference key="1">
    <citation type="journal article" date="1997" name="Plant Cell">
        <title>A Myb-related transcription factor is involved in the phytochrome regulation of an Arabidopsis Lhcb gene.</title>
        <authorList>
            <person name="Wang Z.-Y."/>
            <person name="Kenigsbuch D."/>
            <person name="Sun L."/>
            <person name="Harel E."/>
            <person name="Ong M.S."/>
            <person name="Tobin E.M."/>
        </authorList>
    </citation>
    <scope>NUCLEOTIDE SEQUENCE [GENOMIC DNA / MRNA] (ISOFORM 1)</scope>
    <scope>SUBCELLULAR LOCATION</scope>
    <scope>INDUCTION BY LIGHT</scope>
    <scope>DNA-BINDING</scope>
    <source>
        <strain>cv. Columbia</strain>
    </source>
</reference>
<reference key="2">
    <citation type="journal article" date="2006" name="Plant Mol. Biol.">
        <title>The MYB transcription factor superfamily of Arabidopsis: expression analysis and phylogenetic comparison with the rice MYB family.</title>
        <authorList>
            <person name="Chen Y."/>
            <person name="Yang X."/>
            <person name="He K."/>
            <person name="Liu M."/>
            <person name="Li J."/>
            <person name="Gao Z."/>
            <person name="Lin Z."/>
            <person name="Zhang Y."/>
            <person name="Wang X."/>
            <person name="Qiu X."/>
            <person name="Shen Y."/>
            <person name="Zhang L."/>
            <person name="Deng X."/>
            <person name="Luo J."/>
            <person name="Deng X.-W."/>
            <person name="Chen Z."/>
            <person name="Gu H."/>
            <person name="Qu L.-J."/>
        </authorList>
    </citation>
    <scope>NUCLEOTIDE SEQUENCE [MRNA] (ISOFORM 1)</scope>
    <scope>GENE FAMILY</scope>
</reference>
<reference key="3">
    <citation type="journal article" date="1999" name="Nature">
        <title>Sequence and analysis of chromosome 2 of the plant Arabidopsis thaliana.</title>
        <authorList>
            <person name="Lin X."/>
            <person name="Kaul S."/>
            <person name="Rounsley S.D."/>
            <person name="Shea T.P."/>
            <person name="Benito M.-I."/>
            <person name="Town C.D."/>
            <person name="Fujii C.Y."/>
            <person name="Mason T.M."/>
            <person name="Bowman C.L."/>
            <person name="Barnstead M.E."/>
            <person name="Feldblyum T.V."/>
            <person name="Buell C.R."/>
            <person name="Ketchum K.A."/>
            <person name="Lee J.J."/>
            <person name="Ronning C.M."/>
            <person name="Koo H.L."/>
            <person name="Moffat K.S."/>
            <person name="Cronin L.A."/>
            <person name="Shen M."/>
            <person name="Pai G."/>
            <person name="Van Aken S."/>
            <person name="Umayam L."/>
            <person name="Tallon L.J."/>
            <person name="Gill J.E."/>
            <person name="Adams M.D."/>
            <person name="Carrera A.J."/>
            <person name="Creasy T.H."/>
            <person name="Goodman H.M."/>
            <person name="Somerville C.R."/>
            <person name="Copenhaver G.P."/>
            <person name="Preuss D."/>
            <person name="Nierman W.C."/>
            <person name="White O."/>
            <person name="Eisen J.A."/>
            <person name="Salzberg S.L."/>
            <person name="Fraser C.M."/>
            <person name="Venter J.C."/>
        </authorList>
    </citation>
    <scope>NUCLEOTIDE SEQUENCE [LARGE SCALE GENOMIC DNA]</scope>
    <source>
        <strain>cv. Columbia</strain>
    </source>
</reference>
<reference key="4">
    <citation type="journal article" date="2017" name="Plant J.">
        <title>Araport11: a complete reannotation of the Arabidopsis thaliana reference genome.</title>
        <authorList>
            <person name="Cheng C.Y."/>
            <person name="Krishnakumar V."/>
            <person name="Chan A.P."/>
            <person name="Thibaud-Nissen F."/>
            <person name="Schobel S."/>
            <person name="Town C.D."/>
        </authorList>
    </citation>
    <scope>GENOME REANNOTATION</scope>
    <source>
        <strain>cv. Columbia</strain>
    </source>
</reference>
<reference key="5">
    <citation type="journal article" date="2003" name="Science">
        <title>Empirical analysis of transcriptional activity in the Arabidopsis genome.</title>
        <authorList>
            <person name="Yamada K."/>
            <person name="Lim J."/>
            <person name="Dale J.M."/>
            <person name="Chen H."/>
            <person name="Shinn P."/>
            <person name="Palm C.J."/>
            <person name="Southwick A.M."/>
            <person name="Wu H.C."/>
            <person name="Kim C.J."/>
            <person name="Nguyen M."/>
            <person name="Pham P.K."/>
            <person name="Cheuk R.F."/>
            <person name="Karlin-Newmann G."/>
            <person name="Liu S.X."/>
            <person name="Lam B."/>
            <person name="Sakano H."/>
            <person name="Wu T."/>
            <person name="Yu G."/>
            <person name="Miranda M."/>
            <person name="Quach H.L."/>
            <person name="Tripp M."/>
            <person name="Chang C.H."/>
            <person name="Lee J.M."/>
            <person name="Toriumi M.J."/>
            <person name="Chan M.M."/>
            <person name="Tang C.C."/>
            <person name="Onodera C.S."/>
            <person name="Deng J.M."/>
            <person name="Akiyama K."/>
            <person name="Ansari Y."/>
            <person name="Arakawa T."/>
            <person name="Banh J."/>
            <person name="Banno F."/>
            <person name="Bowser L."/>
            <person name="Brooks S.Y."/>
            <person name="Carninci P."/>
            <person name="Chao Q."/>
            <person name="Choy N."/>
            <person name="Enju A."/>
            <person name="Goldsmith A.D."/>
            <person name="Gurjal M."/>
            <person name="Hansen N.F."/>
            <person name="Hayashizaki Y."/>
            <person name="Johnson-Hopson C."/>
            <person name="Hsuan V.W."/>
            <person name="Iida K."/>
            <person name="Karnes M."/>
            <person name="Khan S."/>
            <person name="Koesema E."/>
            <person name="Ishida J."/>
            <person name="Jiang P.X."/>
            <person name="Jones T."/>
            <person name="Kawai J."/>
            <person name="Kamiya A."/>
            <person name="Meyers C."/>
            <person name="Nakajima M."/>
            <person name="Narusaka M."/>
            <person name="Seki M."/>
            <person name="Sakurai T."/>
            <person name="Satou M."/>
            <person name="Tamse R."/>
            <person name="Vaysberg M."/>
            <person name="Wallender E.K."/>
            <person name="Wong C."/>
            <person name="Yamamura Y."/>
            <person name="Yuan S."/>
            <person name="Shinozaki K."/>
            <person name="Davis R.W."/>
            <person name="Theologis A."/>
            <person name="Ecker J.R."/>
        </authorList>
    </citation>
    <scope>NUCLEOTIDE SEQUENCE [LARGE SCALE MRNA] (ISOFORM 2)</scope>
    <source>
        <strain>cv. Columbia</strain>
    </source>
</reference>
<reference key="6">
    <citation type="journal article" date="1998" name="Cell">
        <title>Constitutive expression of the CIRCADIAN CLOCK ASSOCIATED 1 (CCA1) gene disrupts circadian rhythms and suppresses its own expression.</title>
        <authorList>
            <person name="Wang Z.-Y."/>
            <person name="Tobin E.M."/>
        </authorList>
    </citation>
    <scope>FUNCTION</scope>
    <scope>INDUCTION</scope>
</reference>
<reference key="7">
    <citation type="journal article" date="1998" name="Proc. Natl. Acad. Sci. U.S.A.">
        <title>Protein kinase CK2 interacts with and phosphorylates the Arabidopsis circadian clock-associated 1 protein.</title>
        <authorList>
            <person name="Sugano S."/>
            <person name="Andronis C."/>
            <person name="Green R.M."/>
            <person name="Wang Z.-Y."/>
            <person name="Tobin E.M."/>
        </authorList>
    </citation>
    <scope>INTERACTION WITH CKB1; CKB2 AND CKB3</scope>
    <scope>PHOSPHORYLATION</scope>
</reference>
<reference key="8">
    <citation type="journal article" date="1999" name="Proc. Natl. Acad. Sci. U.S.A.">
        <title>Loss of the circadian clock-associated protein 1 in Arabidopsis results in altered clock-regulated gene expression.</title>
        <authorList>
            <person name="Green R.M."/>
            <person name="Tobin E.M."/>
        </authorList>
    </citation>
    <scope>DISRUPTION PHENOTYPE</scope>
</reference>
<reference key="9">
    <citation type="journal article" date="2001" name="Science">
        <title>Reciprocal regulation between TOC1 and LHY/CCA1 within the Arabidopsis circadian clock.</title>
        <authorList>
            <person name="Alabadi D."/>
            <person name="Oyama T."/>
            <person name="Yanovsky M.J."/>
            <person name="Harmon F.G."/>
            <person name="Mas P."/>
            <person name="Kay S.A."/>
        </authorList>
    </citation>
    <scope>FUNCTION</scope>
    <scope>DNA-BINDING</scope>
</reference>
<reference key="10">
    <citation type="journal article" date="2002" name="Curr. Biol.">
        <title>Critical role for CCA1 and LHY in maintaining circadian rhythmicity in Arabidopsis.</title>
        <authorList>
            <person name="Alabadi D."/>
            <person name="Yanovsky M.J."/>
            <person name="Mas P."/>
            <person name="Harmer S.L."/>
            <person name="Kay S.A."/>
        </authorList>
    </citation>
    <scope>FUNCTION</scope>
</reference>
<reference key="11">
    <citation type="journal article" date="2002" name="Dev. Cell">
        <title>LHY and CCA1 are partially redundant genes required to maintain circadian rhythms in Arabidopsis.</title>
        <authorList>
            <person name="Mizoguchi T."/>
            <person name="Wheatley K."/>
            <person name="Hanzawa Y."/>
            <person name="Wright L."/>
            <person name="Mizoguchi M."/>
            <person name="Song H.-R."/>
            <person name="Carre I.A."/>
            <person name="Coupland G."/>
        </authorList>
    </citation>
    <scope>FUNCTION</scope>
</reference>
<reference key="12">
    <citation type="journal article" date="2004" name="Proc. Natl. Acad. Sci. U.S.A.">
        <title>CK2 phosphorylation of CCA1 is necessary for its circadian oscillator function in Arabidopsis.</title>
        <authorList>
            <person name="Daniel X."/>
            <person name="Sugano S."/>
            <person name="Tobin E.M."/>
        </authorList>
    </citation>
    <scope>INTERACTION WITH CKB3</scope>
    <scope>MUTAGENESIS OF SER-5; SER-6; SER-431; SER-432; SER-433 AND SER-484</scope>
    <scope>PHOSPHORYLATION AT SER-5 AND SER-6</scope>
</reference>
<reference key="13">
    <citation type="journal article" date="2007" name="Plant Physiol.">
        <title>CIRCADIAN CLOCK ASSOCIATED1 transcript stability and the entrainment of the circadian clock in Arabidopsis.</title>
        <authorList>
            <person name="Yakir E."/>
            <person name="Hilman D."/>
            <person name="Hassidim M."/>
            <person name="Green R.M."/>
        </authorList>
    </citation>
    <scope>INDUCTION BY LIGHT</scope>
</reference>
<reference key="14">
    <citation type="journal article" date="2008" name="Science">
        <title>The circadian clock in Arabidopsis roots is a simplified slave version of the clock in shoots.</title>
        <authorList>
            <person name="James A.B."/>
            <person name="Monreal J.A."/>
            <person name="Nimmo G.A."/>
            <person name="Kelly C.L."/>
            <person name="Herzyk P."/>
            <person name="Jenkins G.I."/>
            <person name="Nimmo H.G."/>
        </authorList>
    </citation>
    <scope>FUNCTION</scope>
    <scope>TISSUE SPECIFICITY</scope>
    <scope>INDUCTION</scope>
</reference>
<reference key="15">
    <citation type="journal article" date="2009" name="Plant Physiol.">
        <title>CIRCADIAN CLOCK ASSOCIATED1 and LATE ELONGATED HYPOCOTYL function synergistically in the circadian clock of Arabidopsis.</title>
        <authorList>
            <person name="Lu S.X."/>
            <person name="Knowles S.M."/>
            <person name="Andronis C."/>
            <person name="Ong M.S."/>
            <person name="Tobin E.M."/>
        </authorList>
    </citation>
    <scope>FUNCTION</scope>
    <scope>INDUCTION</scope>
    <scope>SUBCELLULAR LOCATION</scope>
    <scope>TISSUE SPECIFICITY</scope>
    <scope>SUBUNIT</scope>
    <scope>INTERACTION WITH LHY</scope>
    <scope>DISRUPTION PHENOTYPE</scope>
</reference>
<reference key="16">
    <citation type="journal article" date="2009" name="Plant Physiol.">
        <title>Posttranslational regulation of CIRCADIAN CLOCK ASSOCIATED1 in the circadian oscillator of Arabidopsis.</title>
        <authorList>
            <person name="Yakir E."/>
            <person name="Hilman D."/>
            <person name="Kron I."/>
            <person name="Hassidim M."/>
            <person name="Melamed-Book N."/>
            <person name="Green R.M."/>
        </authorList>
    </citation>
    <scope>FUNCTION</scope>
    <scope>SUBCELLULAR LOCATION</scope>
    <scope>SUBUNIT</scope>
    <scope>INTERACTION WITH LHY</scope>
</reference>
<reference key="17">
    <citation type="journal article" date="2009" name="Science">
        <title>A functional genomics approach reveals CHE as a component of the Arabidopsis circadian clock.</title>
        <authorList>
            <person name="Pruneda-Paz J.L."/>
            <person name="Breton G."/>
            <person name="Para A."/>
            <person name="Kay S.A."/>
        </authorList>
    </citation>
    <scope>INDUCTION</scope>
</reference>
<reference key="18">
    <citation type="journal article" date="2010" name="Plant Cell">
        <title>PSEUDO-RESPONSE REGULATORS 9, 7, and 5 are transcriptional repressors in the Arabidopsis circadian clock.</title>
        <authorList>
            <person name="Nakamichi N."/>
            <person name="Kiba T."/>
            <person name="Henriques R."/>
            <person name="Mizuno T."/>
            <person name="Chua N.H."/>
            <person name="Sakakibara H."/>
        </authorList>
    </citation>
    <scope>INDUCTION</scope>
</reference>
<reference key="19">
    <citation type="journal article" date="2014" name="Plant Cell">
        <title>LNK1 and LNK2 are transcriptional coactivators in the Arabidopsis circadian oscillator.</title>
        <authorList>
            <person name="Xie Q."/>
            <person name="Wang P."/>
            <person name="Liu X."/>
            <person name="Yuan L."/>
            <person name="Wang L."/>
            <person name="Zhang C."/>
            <person name="Li Y."/>
            <person name="Xing H."/>
            <person name="Zhi L."/>
            <person name="Yue Z."/>
            <person name="Zhao C."/>
            <person name="McClung C.R."/>
            <person name="Xu X."/>
        </authorList>
    </citation>
    <scope>INTERACTION WITH LNK1 AND LNK2</scope>
</reference>
<reference key="20">
    <citation type="journal article" date="2014" name="Proc. Natl. Acad. Sci. U.S.A.">
        <title>FBH1 affects warm temperature responses in the Arabidopsis circadian clock.</title>
        <authorList>
            <person name="Nagel D.H."/>
            <person name="Pruneda-Paz J.L."/>
            <person name="Kay S.A."/>
        </authorList>
    </citation>
    <scope>FUNCTION</scope>
    <scope>DISRUPTION PHENOTYPE</scope>
    <scope>INDUCTION BY BHLH80/FBH1</scope>
    <source>
        <strain>cv. Columbia</strain>
        <strain>cv. Wassilewskija</strain>
    </source>
</reference>
<reference key="21">
    <citation type="journal article" date="2019" name="Genome Biol.">
        <title>Diurnal regulation of SDG2 and JMJ14 by circadian clock oscillators orchestrates histone modification rhythms in Arabidopsis.</title>
        <authorList>
            <person name="Song Q."/>
            <person name="Huang T.-Y."/>
            <person name="Yu H.H."/>
            <person name="Ando A."/>
            <person name="Mas P."/>
            <person name="Ha M."/>
            <person name="Chen Z.J."/>
        </authorList>
    </citation>
    <scope>FUNCTION</scope>
    <scope>DISRUPTION PHENOTYPE</scope>
    <source>
        <strain>cv. Columbia</strain>
    </source>
</reference>
<name>CCA1_ARATH</name>
<feature type="chain" id="PRO_0000388997" description="Protein CCA1">
    <location>
        <begin position="1"/>
        <end position="608"/>
    </location>
</feature>
<feature type="domain" description="HTH myb-type" evidence="1">
    <location>
        <begin position="19"/>
        <end position="73"/>
    </location>
</feature>
<feature type="DNA-binding region" description="H-T-H motif" evidence="1">
    <location>
        <begin position="46"/>
        <end position="69"/>
    </location>
</feature>
<feature type="region of interest" description="Disordered" evidence="2">
    <location>
        <begin position="86"/>
        <end position="152"/>
    </location>
</feature>
<feature type="region of interest" description="Disordered" evidence="2">
    <location>
        <begin position="188"/>
        <end position="225"/>
    </location>
</feature>
<feature type="region of interest" description="Disordered" evidence="2">
    <location>
        <begin position="238"/>
        <end position="260"/>
    </location>
</feature>
<feature type="region of interest" description="Disordered" evidence="2">
    <location>
        <begin position="362"/>
        <end position="483"/>
    </location>
</feature>
<feature type="compositionally biased region" description="Polar residues" evidence="2">
    <location>
        <begin position="109"/>
        <end position="119"/>
    </location>
</feature>
<feature type="compositionally biased region" description="Basic and acidic residues" evidence="2">
    <location>
        <begin position="122"/>
        <end position="152"/>
    </location>
</feature>
<feature type="compositionally biased region" description="Basic and acidic residues" evidence="2">
    <location>
        <begin position="189"/>
        <end position="206"/>
    </location>
</feature>
<feature type="compositionally biased region" description="Polar residues" evidence="2">
    <location>
        <begin position="207"/>
        <end position="223"/>
    </location>
</feature>
<feature type="compositionally biased region" description="Basic and acidic residues" evidence="2">
    <location>
        <begin position="369"/>
        <end position="396"/>
    </location>
</feature>
<feature type="compositionally biased region" description="Basic and acidic residues" evidence="2">
    <location>
        <begin position="406"/>
        <end position="421"/>
    </location>
</feature>
<feature type="compositionally biased region" description="Basic and acidic residues" evidence="2">
    <location>
        <begin position="440"/>
        <end position="460"/>
    </location>
</feature>
<feature type="modified residue" description="Phosphoserine; by CK2" evidence="7">
    <location>
        <position position="5"/>
    </location>
</feature>
<feature type="modified residue" description="Phosphoserine; by CK2" evidence="7">
    <location>
        <position position="6"/>
    </location>
</feature>
<feature type="splice variant" id="VSP_038391" description="In isoform 2." evidence="20">
    <location>
        <begin position="1"/>
        <end position="82"/>
    </location>
</feature>
<feature type="mutagenesis site" description="No effect on CKB3 binding, but loss of DNA binding; when associated with A-6; A-431; A-432; A-433 and A-484." evidence="7">
    <original>S</original>
    <variation>A</variation>
    <location>
        <position position="5"/>
    </location>
</feature>
<feature type="mutagenesis site" description="No effect on CKB3 binding, but loss of DNA binding; when associated with A-5; A-431; A-432; A-433 and A-484." evidence="7">
    <original>S</original>
    <variation>A</variation>
    <location>
        <position position="6"/>
    </location>
</feature>
<feature type="mutagenesis site" description="No effect on CKB3 binding; but loss of DNA binding; when associated with A-5; A-6; A-432; A-433 and A-484." evidence="7">
    <original>S</original>
    <variation>A</variation>
    <location>
        <position position="431"/>
    </location>
</feature>
<feature type="mutagenesis site" description="No effect on CKB3 binding, but loss of DNA binding; when associated with A-5; A-6; A-431; A-433 and A-484." evidence="7">
    <original>S</original>
    <variation>A</variation>
    <location>
        <position position="432"/>
    </location>
</feature>
<feature type="mutagenesis site" description="No effect on CKB3 binding, but loss of DNA binding; when associated with A-5; A-6; A-431; A-432 and A-484." evidence="7">
    <original>S</original>
    <variation>A</variation>
    <location>
        <position position="433"/>
    </location>
</feature>
<feature type="mutagenesis site" description="No effect on CKB3 binding, but loss of DNA binding; when associated with A-5; A-6; A-431; A-432 and A-433." evidence="7">
    <original>S</original>
    <variation>A</variation>
    <location>
        <position position="484"/>
    </location>
</feature>
<protein>
    <recommendedName>
        <fullName evidence="21">Protein CCA1</fullName>
    </recommendedName>
    <alternativeName>
        <fullName evidence="21">MYB-related transcription factor CCA1</fullName>
    </alternativeName>
    <alternativeName>
        <fullName evidence="21">Protein CIRCADIAN CLOCK ASSOCIATED 1</fullName>
    </alternativeName>
</protein>
<organism>
    <name type="scientific">Arabidopsis thaliana</name>
    <name type="common">Mouse-ear cress</name>
    <dbReference type="NCBI Taxonomy" id="3702"/>
    <lineage>
        <taxon>Eukaryota</taxon>
        <taxon>Viridiplantae</taxon>
        <taxon>Streptophyta</taxon>
        <taxon>Embryophyta</taxon>
        <taxon>Tracheophyta</taxon>
        <taxon>Spermatophyta</taxon>
        <taxon>Magnoliopsida</taxon>
        <taxon>eudicotyledons</taxon>
        <taxon>Gunneridae</taxon>
        <taxon>Pentapetalae</taxon>
        <taxon>rosids</taxon>
        <taxon>malvids</taxon>
        <taxon>Brassicales</taxon>
        <taxon>Brassicaceae</taxon>
        <taxon>Camelineae</taxon>
        <taxon>Arabidopsis</taxon>
    </lineage>
</organism>
<comment type="function">
    <text evidence="4 5 6 9 10 12 15 16 18">Transcription factor involved in the circadian clock and in the phytochrome regulation. Binds to the promoter regions of APRR1/TOC1 and TCP21/CHE to repress their transcription. Binds to the promoter regions of CAB2A and CAB2B to promote their transcription. Represses both LHY and itself. Recognizes the promoter of JMJ14 to regulates its expression during the night in a circadian manner (PubMed:31429787). Binds to the promoter of BHLH80/FBH1 and regulates its expression in response to warm temperature, thus contributing to temperature compensation of the circadian clock (PubMed:25246594).</text>
</comment>
<comment type="subunit">
    <text evidence="7 10 12 14 19">Homodimer or heterodimer with LHY. Interacts with LHY; independently of photoperiod. Probably part of a large complex. Interacts with CKB1, CKB2 and CKB3. Interacts with LNK1 and LNK2 (PubMed:25012192).</text>
</comment>
<comment type="interaction">
    <interactant intactId="EBI-1644880">
        <id>P92973</id>
    </interactant>
    <interactant intactId="EBI-1644972">
        <id>Q08467</id>
        <label>CKA1</label>
    </interactant>
    <organismsDiffer>false</organismsDiffer>
    <experiments>4</experiments>
</comment>
<comment type="interaction">
    <interactant intactId="EBI-1644880">
        <id>P92973</id>
    </interactant>
    <interactant intactId="EBI-1644917">
        <id>P40228</id>
        <label>CKB1</label>
    </interactant>
    <organismsDiffer>false</organismsDiffer>
    <experiments>3</experiments>
</comment>
<comment type="interaction">
    <interactant intactId="EBI-1644880">
        <id>P92973</id>
    </interactant>
    <interactant intactId="EBI-1644873">
        <id>O81275</id>
        <label>CKB3</label>
    </interactant>
    <organismsDiffer>false</organismsDiffer>
    <experiments>6</experiments>
</comment>
<comment type="subcellular location">
    <subcellularLocation>
        <location evidence="1 10 12 17">Nucleus</location>
    </subcellularLocation>
    <text>Moves into the nucleus very soo after translation. This translocation is unaffected by light and dark.</text>
</comment>
<comment type="alternative products">
    <event type="alternative splicing"/>
    <isoform>
        <id>P92973-1</id>
        <name>1</name>
        <sequence type="displayed"/>
    </isoform>
    <isoform>
        <id>P92973-2</id>
        <name>2</name>
        <sequence type="described" ref="VSP_038391"/>
    </isoform>
</comment>
<comment type="tissue specificity">
    <text evidence="9 10">Expressed in leaves, roots, stems, flowers and siliques.</text>
</comment>
<comment type="induction">
    <text evidence="8 9 10 11 13 15 17 18">Circadian-regulation with peak levels occurring around 1 hour after dawn. Up-regulated by APRR1/TOC1 and transiently by light treatment. Down-regulated by APRR5, APRR7 and APRR9. The CCA1 mRNA is relatively stable in the dark and in far-red light but has a short half-life in red and blue light. Modulated by BHLH80/FBH1 via direct negative promoter regulation in response to warm temperature (at 28 degrees Celsius) (PubMed:25246594).</text>
</comment>
<comment type="domain">
    <text>The N-terminal part (11-82) is essential for DNA binding, an internal domain (136-316) is important for homodimerization and for interaction with LHY and the C-terminal part (317-608) is necessary for interaction with CKB3.</text>
</comment>
<comment type="PTM">
    <text evidence="7 19">Phosphorylated at Ser-5, Ser-6, and at least at one of the position Ser-431, Ser-432, Ser-433 or Ser-484. Phosphorylation is involved in dimerization and is necessary for binding to promoters and regulation of the circadian clock.</text>
</comment>
<comment type="disruption phenotype">
    <text evidence="3 10 15 16">Altered phytochrome regulation and shorter circadian oscillations (PubMed:10097183, PubMed:19218364). Abnormal pace and rhythmicity of the circadian clock (PubMed:25246594). The double mutant cca1 lhy accumulates higher levels of JMJ14 but lower levels of ATXR3/SDG2, and exhibits damped H3K4me3 levels near the transcription start sites of genic regions (PubMed:31429787).</text>
</comment>
<comment type="miscellaneous">
    <text>CCA1 and LHY are only partially redundant, but they bind to the same region of the promoters.</text>
</comment>